<sequence length="273" mass="30979">MNKYFTCYVVASLFLSGCTVQHNLINETPSQIVQGHNQVIHQYFDEKNTSGVLVIQTDKKINLYGNALSRANTEYVPASTFKMLNALIGLENQKTDINEIFKWKGEKRSFTAWEKDMTLGEAMKLSAVPVYQELARRIGLDLMQKEVKRIGFGNAEIGQQVDNFWLVGPLKVTPIQEVEFVSQLAHTQLPFSEKVQANVKNMLLLEESNGYKIFGKTGWAMDIKPQVGWLTGWVEQPDGKIVAFALNMEMRSEMPASIRNELLMKSLKQLNII</sequence>
<feature type="signal peptide" evidence="3">
    <location>
        <begin position="1"/>
        <end position="17"/>
    </location>
</feature>
<feature type="chain" id="PRO_0000461488" description="Beta-lactamase OXA-23">
    <location>
        <begin position="18"/>
        <end position="273"/>
    </location>
</feature>
<feature type="active site" description="Acyl-ester intermediate" evidence="9 10 49 52 58">
    <location>
        <position position="79"/>
    </location>
</feature>
<feature type="binding site" evidence="9 10 49 52 58">
    <location>
        <position position="79"/>
    </location>
    <ligand>
        <name>a beta-lactam</name>
        <dbReference type="ChEBI" id="CHEBI:35627"/>
    </ligand>
</feature>
<feature type="binding site" evidence="1">
    <location>
        <position position="82"/>
    </location>
    <ligand>
        <name>a beta-lactam</name>
        <dbReference type="ChEBI" id="CHEBI:35627"/>
    </ligand>
</feature>
<feature type="binding site" evidence="1">
    <location>
        <position position="126"/>
    </location>
    <ligand>
        <name>a beta-lactam</name>
        <dbReference type="ChEBI" id="CHEBI:35627"/>
    </ligand>
</feature>
<feature type="binding site" evidence="9 10 49 52 58">
    <location>
        <position position="217"/>
    </location>
    <ligand>
        <name>a beta-lactam</name>
        <dbReference type="ChEBI" id="CHEBI:35627"/>
    </ligand>
</feature>
<feature type="binding site" evidence="9 10 49 52 58">
    <location>
        <position position="219"/>
    </location>
    <ligand>
        <name>a beta-lactam</name>
        <dbReference type="ChEBI" id="CHEBI:35627"/>
    </ligand>
</feature>
<feature type="binding site" evidence="9 10 49 52 58">
    <location>
        <position position="259"/>
    </location>
    <ligand>
        <name>a beta-lactam</name>
        <dbReference type="ChEBI" id="CHEBI:35627"/>
    </ligand>
</feature>
<feature type="modified residue" description="N6-carboxylysine" evidence="9 10 11 53 54 56 59 62">
    <location>
        <position position="82"/>
    </location>
</feature>
<feature type="mutagenesis site" description="Decreases catalytic efficiency, about 40-fold, 30-fold, 3-fold or 2-fold, with respect to doripenem, meropenem, imipenem, or ampicillin, respectively; when associated with A-221. Decreases resistance to meropenem about 8-fold, to doripenem about 4-fold and to ampicillin or imipenem about 2-fold, in A.baumannii CIP 70.10 strain; when associated with A-221." evidence="10">
    <original>F</original>
    <variation>A</variation>
    <location>
        <position position="110"/>
    </location>
</feature>
<feature type="mutagenesis site" description="Confers hydrolytic capacity, with respect to ceftazidime. Increases catalytic efficiency about 10-fold, with respect to cefotaxime. Increases catalytic efficiency about 1500-fold, with respect to ceftriaxone and aztreonam." evidence="8">
    <original>A</original>
    <variation>AA</variation>
    <location>
        <position position="220"/>
    </location>
</feature>
<feature type="mutagenesis site" description="Decreases catalytic efficiency, about 40-fold, 30-fold, 3-fold or 2-fold, with respect to doripenem, meropenem, imipenem, or ampicillin, respectively; when associated with A-110. Decreases resistance to meropenem about 8-fold, to doripenem about 4-fold and to ampicillin or imipenem about 2-fold, in A.baumannii CIP 70.10 strain; when associated with A-110." evidence="10">
    <original>M</original>
    <variation>A</variation>
    <location>
        <position position="221"/>
    </location>
</feature>
<feature type="helix" evidence="63">
    <location>
        <begin position="33"/>
        <end position="46"/>
    </location>
</feature>
<feature type="strand" evidence="63">
    <location>
        <begin position="51"/>
        <end position="56"/>
    </location>
</feature>
<feature type="strand" evidence="63">
    <location>
        <begin position="61"/>
        <end position="66"/>
    </location>
</feature>
<feature type="helix" evidence="63">
    <location>
        <begin position="68"/>
        <end position="72"/>
    </location>
</feature>
<feature type="helix" evidence="63">
    <location>
        <begin position="78"/>
        <end position="81"/>
    </location>
</feature>
<feature type="helix" evidence="63">
    <location>
        <begin position="82"/>
        <end position="91"/>
    </location>
</feature>
<feature type="helix" evidence="63">
    <location>
        <begin position="111"/>
        <end position="113"/>
    </location>
</feature>
<feature type="helix" evidence="63">
    <location>
        <begin position="119"/>
        <end position="124"/>
    </location>
</feature>
<feature type="helix" evidence="63">
    <location>
        <begin position="130"/>
        <end position="138"/>
    </location>
</feature>
<feature type="helix" evidence="63">
    <location>
        <begin position="140"/>
        <end position="150"/>
    </location>
</feature>
<feature type="turn" evidence="63">
    <location>
        <begin position="161"/>
        <end position="163"/>
    </location>
</feature>
<feature type="helix" evidence="63">
    <location>
        <begin position="164"/>
        <end position="167"/>
    </location>
</feature>
<feature type="helix" evidence="63">
    <location>
        <begin position="174"/>
        <end position="185"/>
    </location>
</feature>
<feature type="strand" evidence="63">
    <location>
        <begin position="189"/>
        <end position="191"/>
    </location>
</feature>
<feature type="helix" evidence="63">
    <location>
        <begin position="193"/>
        <end position="202"/>
    </location>
</feature>
<feature type="strand" evidence="63">
    <location>
        <begin position="204"/>
        <end position="208"/>
    </location>
</feature>
<feature type="strand" evidence="63">
    <location>
        <begin position="211"/>
        <end position="220"/>
    </location>
</feature>
<feature type="strand" evidence="63">
    <location>
        <begin position="222"/>
        <end position="235"/>
    </location>
</feature>
<feature type="strand" evidence="63">
    <location>
        <begin position="241"/>
        <end position="250"/>
    </location>
</feature>
<feature type="helix" evidence="63">
    <location>
        <begin position="258"/>
        <end position="269"/>
    </location>
</feature>
<name>BLO23_ACIBA</name>
<comment type="function">
    <text evidence="5 6 8 9 10 11">Class D beta-lactamase which confers resistance to the beta-lactam antibiotics, including ampicillin, and carbapenems such as imipenem and meropenem (PubMed:18725452, PubMed:20194701, PubMed:24012371, PubMed:30530607, PubMed:35420470). Acts via hydrolysis of the beta-lactam ring (PubMed:23877677, PubMed:24012371, PubMed:30530607, PubMed:35420470). Has penicillin-, cephalosporin- and carbapenem-hydrolyzing activities, but lacks ceftazidime-hydrolyzing activity (PubMed:23877677, PubMed:24012371, PubMed:30530607, PubMed:35420470).</text>
</comment>
<comment type="catalytic activity">
    <reaction evidence="8 9 10 11">
        <text>a beta-lactam + H2O = a substituted beta-amino acid</text>
        <dbReference type="Rhea" id="RHEA:20401"/>
        <dbReference type="ChEBI" id="CHEBI:15377"/>
        <dbReference type="ChEBI" id="CHEBI:35627"/>
        <dbReference type="ChEBI" id="CHEBI:140347"/>
        <dbReference type="EC" id="3.5.2.6"/>
    </reaction>
</comment>
<comment type="activity regulation">
    <text evidence="11">Inhibited by the desmethyl carbapenem, MA-1-206, via a covalent binding to Ser-79.</text>
</comment>
<comment type="biophysicochemical properties">
    <kinetics>
        <KM evidence="8">82.9 uM for ampicillin (at pH 7.4 and 25 degrees Celsius, in the presence of 0.025 M NaHCO3)</KM>
        <KM evidence="10">100 uM for ampicillin (at pH 7.0, in the presence of 0.05 M NaHCO3)</KM>
        <KM evidence="8">0.204 uM for imipenem (at pH 7.4 and 25 degrees Celsius, in the presence of 0.025 M NaHCO3)</KM>
        <KM evidence="9">4.8 uM for imipenem (at pH 7.0 and 22 degrees Celsius, in the presence of 0.05 M NaHCO3)</KM>
        <KM evidence="8">0.018 uM for doripenem (at pH 7.4 and 25 degrees Celsius, in the presence of 0.025 M NaHCO3)</KM>
        <KM evidence="9">0.7 uM for doripenem (at pH 7.0 and 22 degrees Celsius, in the presence of 0.05 M NaHCO3)</KM>
        <KM evidence="9">1 uM for meropenem (at pH 7.0 and 22 degrees Celsius, in the presence of 0.05 M NaHCO3)</KM>
        <KM evidence="9">0.5 uM for ertapenem (at pH 7.0 and 22 degrees Celsius, in the presence of 0.05 M NaHCO3)</KM>
        <KM evidence="8">340 uM for cefotaxime (at pH 7.4 and 25 degrees Celsius, in the presence of 0.025 M NaHCO3)</KM>
        <KM evidence="8">3.7 uM for ceftriaxone (at pH 7.4 and 25 degrees Celsius, in the presence of 0.025 M NaHCO3)</KM>
        <text evidence="8 9 10">kcat is 460 sec(-1) for ampicillin (at pH 7.4 and 25 degrees Celsius, in the presence of 0.025 M NaHCO3) (PubMed:23877677). kcat is 580 sec(-1) for ampicillin (at pH 7.0, in the presence of 0.05 M NaHCO3) (PubMed:30530607). kcat is 0.49 sec(-1) for imipenem (at pH 7.4 and 25 degrees Celsius, in the presence of 0.025 M NaHCO3) (PubMed:23877677). kcat is 0.35 sec(-1) for imipenem (at pH 7.0 and 22 degrees Celsius, in the presence of 0.05 M NaHCO3) (PubMed:24012371). kcat is 0.028 sec(-1) for doripenem (at pH 7.4 and 25 degrees Celsius, in the presence of 0.025 M NaHCO3) (PubMed:23877677). kcat is 0.036 sec(-1) for doripenem (at pH 7.0 and 22 degrees Celsius, in the presence of 0.05 M NaHCO3) (PubMed:24012371). kcat is 0.068 sec(-1) for meropenem (at pH 7.0 and 22 degrees Celsius, in the presence of 0.05 M NaHCO3) (PubMed:24012371). kcat is 0.021 sec(-1) for ertapenem (at pH 7.0 and 22 degrees Celsius, in the presence of 0.05 M NaHCO3) (PubMed:24012371). kcat is 5.5 sec(-1) for cefotaxime (at pH 7.4 and 25 degrees Celsius, in the presence of 0.025 M NaHCO3) (PubMed:23877677). kcat is 0.016 sec(-1) for ceftriaxone (at pH 7.4 and 25 degrees Celsius, in the presence of 0.025 M NaHCO3) (PubMed:23877677).</text>
    </kinetics>
</comment>
<comment type="subunit">
    <text evidence="1">Monomer.</text>
</comment>
<comment type="subcellular location">
    <subcellularLocation>
        <location evidence="2">Periplasm</location>
    </subcellularLocation>
</comment>
<comment type="induction">
    <text evidence="4 7">Expression may be regulated by promoter elements associated with upstream insertion elements, such as ISAba1 or ISAba10.</text>
</comment>
<comment type="PTM">
    <text evidence="9 10 11">Carboxylated on the epsilon-amino group of a lysine, with the resulting carbamate functional group serving as a general base (PubMed:24012371, PubMed:30530607, PubMed:35420470). Probably N-carboxylated at Lys-82 at neutral pH in vivo and undergoes complete N-decarboxylation, at pH 4.1, in vitro (PubMed:24012371, PubMed:30530607, PubMed:35420470).</text>
</comment>
<comment type="similarity">
    <text evidence="15">Belongs to the class-D beta-lactamase family.</text>
</comment>
<keyword id="KW-0002">3D-structure</keyword>
<keyword id="KW-0046">Antibiotic resistance</keyword>
<keyword id="KW-0378">Hydrolase</keyword>
<keyword id="KW-0574">Periplasm</keyword>
<keyword id="KW-0614">Plasmid</keyword>
<keyword id="KW-0732">Signal</keyword>
<protein>
    <recommendedName>
        <fullName evidence="12">Beta-lactamase OXA-23</fullName>
        <ecNumber evidence="8 9 10 11">3.5.2.6</ecNumber>
    </recommendedName>
</protein>
<evidence type="ECO:0000250" key="1">
    <source>
        <dbReference type="UniProtKB" id="P13661"/>
    </source>
</evidence>
<evidence type="ECO:0000250" key="2">
    <source>
        <dbReference type="UniProtKB" id="P14489"/>
    </source>
</evidence>
<evidence type="ECO:0000255" key="3">
    <source>
        <dbReference type="PROSITE-ProRule" id="PRU00303"/>
    </source>
</evidence>
<evidence type="ECO:0000269" key="4">
    <source>
    </source>
</evidence>
<evidence type="ECO:0000269" key="5">
    <source>
    </source>
</evidence>
<evidence type="ECO:0000269" key="6">
    <source>
    </source>
</evidence>
<evidence type="ECO:0000269" key="7">
    <source>
    </source>
</evidence>
<evidence type="ECO:0000269" key="8">
    <source>
    </source>
</evidence>
<evidence type="ECO:0000269" key="9">
    <source>
    </source>
</evidence>
<evidence type="ECO:0000269" key="10">
    <source>
    </source>
</evidence>
<evidence type="ECO:0000269" key="11">
    <source>
    </source>
</evidence>
<evidence type="ECO:0000303" key="12">
    <source>
    </source>
</evidence>
<evidence type="ECO:0000303" key="13">
    <source>
    </source>
</evidence>
<evidence type="ECO:0000303" key="14">
    <source>
    </source>
</evidence>
<evidence type="ECO:0000305" key="15"/>
<evidence type="ECO:0000312" key="16">
    <source>
        <dbReference type="EMBL" id="AAV65289.1"/>
    </source>
</evidence>
<evidence type="ECO:0000312" key="17">
    <source>
        <dbReference type="EMBL" id="ABK34775.1"/>
    </source>
</evidence>
<evidence type="ECO:0000312" key="18">
    <source>
        <dbReference type="EMBL" id="ABL67479.1"/>
    </source>
</evidence>
<evidence type="ECO:0000312" key="19">
    <source>
        <dbReference type="EMBL" id="ABN41471.1"/>
    </source>
</evidence>
<evidence type="ECO:0000312" key="20">
    <source>
        <dbReference type="EMBL" id="ABO42039.1"/>
    </source>
</evidence>
<evidence type="ECO:0000312" key="21">
    <source>
        <dbReference type="EMBL" id="ABP87782.1"/>
    </source>
</evidence>
<evidence type="ECO:0000312" key="22">
    <source>
        <dbReference type="EMBL" id="ABU24822.1"/>
    </source>
</evidence>
<evidence type="ECO:0000312" key="23">
    <source>
        <dbReference type="EMBL" id="ACC97561.1"/>
    </source>
</evidence>
<evidence type="ECO:0000312" key="24">
    <source>
        <dbReference type="EMBL" id="ACF35045.1"/>
    </source>
</evidence>
<evidence type="ECO:0000312" key="25">
    <source>
        <dbReference type="EMBL" id="ACH73006.1"/>
    </source>
</evidence>
<evidence type="ECO:0000312" key="26">
    <source>
        <dbReference type="EMBL" id="ACR84315.1"/>
    </source>
</evidence>
<evidence type="ECO:0000312" key="27">
    <source>
        <dbReference type="EMBL" id="ACS14785.1"/>
    </source>
</evidence>
<evidence type="ECO:0000312" key="28">
    <source>
        <dbReference type="EMBL" id="ACV74404.1"/>
    </source>
</evidence>
<evidence type="ECO:0000312" key="29">
    <source>
        <dbReference type="EMBL" id="ACW65151.1"/>
    </source>
</evidence>
<evidence type="ECO:0000312" key="30">
    <source>
        <dbReference type="EMBL" id="ACZ71261.1"/>
    </source>
</evidence>
<evidence type="ECO:0000312" key="31">
    <source>
        <dbReference type="EMBL" id="ADA70728.1"/>
    </source>
</evidence>
<evidence type="ECO:0000312" key="32">
    <source>
        <dbReference type="EMBL" id="ADI24453.1"/>
    </source>
</evidence>
<evidence type="ECO:0000312" key="33">
    <source>
        <dbReference type="EMBL" id="ADT82731.1"/>
    </source>
</evidence>
<evidence type="ECO:0000312" key="34">
    <source>
        <dbReference type="EMBL" id="AEO37447.1"/>
    </source>
</evidence>
<evidence type="ECO:0000312" key="35">
    <source>
        <dbReference type="EMBL" id="AER61540.1"/>
    </source>
</evidence>
<evidence type="ECO:0000312" key="36">
    <source>
        <dbReference type="EMBL" id="AHM95286.1"/>
    </source>
</evidence>
<evidence type="ECO:0000312" key="37">
    <source>
        <dbReference type="EMBL" id="AIZ49290.1"/>
    </source>
</evidence>
<evidence type="ECO:0000312" key="38">
    <source>
        <dbReference type="EMBL" id="AJF79934.1"/>
    </source>
</evidence>
<evidence type="ECO:0000312" key="39">
    <source>
        <dbReference type="EMBL" id="AJG42107.1"/>
    </source>
</evidence>
<evidence type="ECO:0000312" key="40">
    <source>
        <dbReference type="EMBL" id="AKA30333.1"/>
    </source>
</evidence>
<evidence type="ECO:0000312" key="41">
    <source>
        <dbReference type="EMBL" id="AKH45594.1"/>
    </source>
</evidence>
<evidence type="ECO:0000312" key="42">
    <source>
        <dbReference type="EMBL" id="AWK92615.2"/>
    </source>
</evidence>
<evidence type="ECO:0000312" key="43">
    <source>
        <dbReference type="EMBL" id="CAB69042.1"/>
    </source>
</evidence>
<evidence type="ECO:0000312" key="44">
    <source>
        <dbReference type="EMBL" id="KZA16122.1"/>
    </source>
</evidence>
<evidence type="ECO:0000312" key="45">
    <source>
        <dbReference type="EMBL" id="RTQ67601.1"/>
    </source>
</evidence>
<evidence type="ECO:0000312" key="46">
    <source>
        <dbReference type="EMBL" id="SSI73996.1"/>
    </source>
</evidence>
<evidence type="ECO:0000312" key="47">
    <source>
        <dbReference type="EMBL" id="UZG64349.1"/>
    </source>
</evidence>
<evidence type="ECO:0000312" key="48">
    <source>
        <dbReference type="EMBL" id="UZG64571.1"/>
    </source>
</evidence>
<evidence type="ECO:0000312" key="49">
    <source>
        <dbReference type="PDB" id="6N6U"/>
    </source>
</evidence>
<evidence type="ECO:0000312" key="50">
    <source>
        <dbReference type="Proteomes" id="UP000032746"/>
    </source>
</evidence>
<evidence type="ECO:0000312" key="51">
    <source>
        <dbReference type="Proteomes" id="UP000268239"/>
    </source>
</evidence>
<evidence type="ECO:0007744" key="52">
    <source>
        <dbReference type="PDB" id="4JF4"/>
    </source>
</evidence>
<evidence type="ECO:0007744" key="53">
    <source>
        <dbReference type="PDB" id="4JF5"/>
    </source>
</evidence>
<evidence type="ECO:0007744" key="54">
    <source>
        <dbReference type="PDB" id="4JF6"/>
    </source>
</evidence>
<evidence type="ECO:0007744" key="55">
    <source>
        <dbReference type="PDB" id="4K0X"/>
    </source>
</evidence>
<evidence type="ECO:0007744" key="56">
    <source>
        <dbReference type="PDB" id="6N6T"/>
    </source>
</evidence>
<evidence type="ECO:0007744" key="57">
    <source>
        <dbReference type="PDB" id="6N6U"/>
    </source>
</evidence>
<evidence type="ECO:0007744" key="58">
    <source>
        <dbReference type="PDB" id="6N6V"/>
    </source>
</evidence>
<evidence type="ECO:0007744" key="59">
    <source>
        <dbReference type="PDB" id="6N6W"/>
    </source>
</evidence>
<evidence type="ECO:0007744" key="60">
    <source>
        <dbReference type="PDB" id="7T7D"/>
    </source>
</evidence>
<evidence type="ECO:0007744" key="61">
    <source>
        <dbReference type="PDB" id="7T7E"/>
    </source>
</evidence>
<evidence type="ECO:0007744" key="62">
    <source>
        <dbReference type="PDB" id="7T7G"/>
    </source>
</evidence>
<evidence type="ECO:0007829" key="63">
    <source>
        <dbReference type="PDB" id="4JF5"/>
    </source>
</evidence>
<geneLocation type="plasmid" evidence="36">
    <name>pA85-3</name>
</geneLocation>
<geneLocation type="plasmid" evidence="19">
    <name>pAB13</name>
</geneLocation>
<geneLocation type="plasmid" evidence="39">
    <name>pABKp1-like</name>
</geneLocation>
<geneLocation type="plasmid" evidence="38">
    <name>pAZJ221</name>
</geneLocation>
<geneLocation type="plasmid" evidence="37">
    <name>pD46-3</name>
</geneLocation>
<geneLocation type="plasmid" evidence="47">
    <name>pRBH2-5</name>
</geneLocation>
<geneLocation type="plasmid" evidence="48">
    <name>pRBH2-6</name>
</geneLocation>
<geneLocation type="plasmid" evidence="22">
    <name>unnamed</name>
</geneLocation>
<reference evidence="43" key="1">
    <citation type="journal article" date="2000" name="Antimicrob. Agents Chemother.">
        <title>Sequence analysis of ARI-1, a novel OXA beta-lactamase, responsible for imipenem resistance in Acinetobacter baumannii 6B92.</title>
        <authorList>
            <person name="Donald H.M."/>
            <person name="Scaife W."/>
            <person name="Amyes S.G."/>
            <person name="Young H.K."/>
        </authorList>
    </citation>
    <scope>NUCLEOTIDE SEQUENCE [GENOMIC DNA]</scope>
    <scope>NOMENCLATURE</scope>
    <source>
        <strain evidence="43">6B92</strain>
    </source>
</reference>
<reference evidence="19" key="2">
    <citation type="journal article" date="2007" name="Antimicrob. Agents Chemother.">
        <title>Genetics and expression of the carbapenem-hydrolyzing oxacillinase gene blaOXA-23 in Acinetobacter baumannii.</title>
        <authorList>
            <person name="Corvec S."/>
            <person name="Poirel L."/>
            <person name="Naas T."/>
            <person name="Drugeon H."/>
            <person name="Nordmann P."/>
        </authorList>
    </citation>
    <scope>NUCLEOTIDE SEQUENCE [GENOMIC DNA]</scope>
    <scope>INDUCTION</scope>
    <source>
        <plasmid evidence="19">pAB13</plasmid>
    </source>
</reference>
<reference evidence="21" key="3">
    <citation type="journal article" date="2007" name="Antimicrob. Agents Chemother.">
        <title>Molecular epidemiology of clinical isolates of carbapenem-resistant Acinetobacter spp. from Chinese hospitals.</title>
        <authorList>
            <person name="Wang H."/>
            <person name="Guo P."/>
            <person name="Sun H."/>
            <person name="Wang H."/>
            <person name="Yang Q."/>
            <person name="Chen M."/>
            <person name="Xu Y."/>
            <person name="Zhu Y."/>
        </authorList>
    </citation>
    <scope>NUCLEOTIDE SEQUENCE [GENOMIC DNA]</scope>
</reference>
<reference evidence="16" key="4">
    <citation type="journal article" date="2007" name="J. Antimicrob. Chemother.">
        <title>IMP-4 and OXA beta-lactamases in Acinetobacter baumannii from Singapore.</title>
        <authorList>
            <person name="Koh T.H."/>
            <person name="Sng L.H."/>
            <person name="Wang G.C."/>
            <person name="Hsu L.Y."/>
            <person name="Zhao Y."/>
        </authorList>
    </citation>
    <scope>NUCLEOTIDE SEQUENCE [GENOMIC DNA]</scope>
    <source>
        <strain evidence="16">DR25547/96</strain>
    </source>
</reference>
<reference evidence="20" key="5">
    <citation type="journal article" date="2007" name="J. Clin. Microbiol.">
        <title>Horizontal gene transfer in a polyclonal outbreak of carbapenem-resistant Acinetobacter baumannii.</title>
        <authorList>
            <person name="Valenzuela J.K."/>
            <person name="Thomas L."/>
            <person name="Partridge S.R."/>
            <person name="van der Reijden T."/>
            <person name="Dijkshoorn L."/>
            <person name="Iredell J."/>
        </authorList>
    </citation>
    <scope>NUCLEOTIDE SEQUENCE [GENOMIC DNA]</scope>
    <source>
        <strain evidence="20">WM99c</strain>
    </source>
</reference>
<reference evidence="23" key="6">
    <citation type="journal article" date="2008" name="Antimicrob. Agents Chemother.">
        <title>Genetic basis of multidrug resistance in Acinetobacter baumannii clinical isolates at a tertiary medical center in Pennsylvania.</title>
        <authorList>
            <person name="Adams-Haduch J.M."/>
            <person name="Paterson D.L."/>
            <person name="Sidjabat H.E."/>
            <person name="Pasculle A.W."/>
            <person name="Potoski B.A."/>
            <person name="Muto C.A."/>
            <person name="Harrison L.H."/>
            <person name="Doi Y."/>
        </authorList>
    </citation>
    <scope>NUCLEOTIDE SEQUENCE [GENOMIC DNA]</scope>
    <scope>FUNCTION</scope>
    <source>
        <strain evidence="23">AB017</strain>
    </source>
</reference>
<reference evidence="18" key="7">
    <citation type="journal article" date="2008" name="FEMS Microbiol. Lett.">
        <title>Emergence and spread of carbapenem-resistant Acinetobacter baumannii in a tertiary care hospital in Turkey.</title>
        <authorList>
            <person name="Meric M."/>
            <person name="Kasap M."/>
            <person name="Gacar G."/>
            <person name="Budak F."/>
            <person name="Dundar D."/>
            <person name="Kolayli F."/>
            <person name="Eroglu C."/>
            <person name="Vahaboglu H."/>
        </authorList>
    </citation>
    <scope>NUCLEOTIDE SEQUENCE [GENOMIC DNA]</scope>
    <source>
        <strain evidence="18">AcKOU1</strain>
    </source>
</reference>
<reference evidence="17" key="8">
    <citation type="journal article" date="2008" name="Int. J. Antimicrob. Agents">
        <title>An outbreak of carbapenem-resistant Acinetobacter baumannii producing OXA-23 carbapenemase in western China.</title>
        <authorList>
            <person name="Zong Z."/>
            <person name="Lu X."/>
            <person name="Valenzuela J.K."/>
            <person name="Partridge S.R."/>
            <person name="Iredell J."/>
        </authorList>
    </citation>
    <scope>NUCLEOTIDE SEQUENCE [GENOMIC DNA]</scope>
    <source>
        <strain evidence="17">17368</strain>
    </source>
</reference>
<reference evidence="25" key="9">
    <citation type="journal article" date="2009" name="Ann. Clin. Microbiol. Antimicrob.">
        <title>Genetic relatedness and molecular characterization of multidrug resistant Acinetobacter baumannii isolated in central Ohio, USA.</title>
        <authorList>
            <person name="Srinivasan V.B."/>
            <person name="Rajamohan G."/>
            <person name="Pancholi P."/>
            <person name="Stevenson K."/>
            <person name="Tadesse D."/>
            <person name="Patchanee P."/>
            <person name="Marcon M."/>
            <person name="Gebreyes W.A."/>
        </authorList>
    </citation>
    <scope>NUCLEOTIDE SEQUENCE [GENOMIC DNA]</scope>
    <source>
        <strain evidence="25">AC0045</strain>
    </source>
</reference>
<reference evidence="24" key="10">
    <citation type="journal article" date="2009" name="J. Med. Microbiol.">
        <title>Molecular characterization of carbapenem-resistant Acinetobacter species in an Irish university hospital: predominance of Acinetobacter genomic species 3.</title>
        <authorList>
            <person name="Boo T.W."/>
            <person name="Walsh F."/>
            <person name="Crowley B."/>
        </authorList>
    </citation>
    <scope>NUCLEOTIDE SEQUENCE [GENOMIC DNA]</scope>
    <source>
        <strain evidence="24">U437</strain>
    </source>
</reference>
<reference evidence="29" key="11">
    <citation type="journal article" date="2010" name="Antimicrob. Agents Chemother.">
        <title>Genetic basis of multidrug resistance in Acinetobacter clinical isolates in Taiwan.</title>
        <authorList>
            <person name="Lin Y.C."/>
            <person name="Hsia K.C."/>
            <person name="Chen Y.C."/>
            <person name="Sheng W.H."/>
            <person name="Chang S.C."/>
            <person name="Liao M.H."/>
            <person name="Li S.Y."/>
        </authorList>
    </citation>
    <scope>NUCLEOTIDE SEQUENCE [GENOMIC DNA]</scope>
    <scope>FUNCTION</scope>
    <source>
        <strain evidence="29">6AB15</strain>
    </source>
</reference>
<reference evidence="31" key="12">
    <citation type="journal article" date="2010" name="Emerg. Infect. Dis.">
        <title>Worldwide dissemination of the blaOXA-23 carbapenemase gene of Acinetobacter baumannii.</title>
        <authorList>
            <person name="Mugnier P.D."/>
            <person name="Poirel L."/>
            <person name="Naas T."/>
            <person name="Nordmann P."/>
        </authorList>
    </citation>
    <scope>NUCLEOTIDE SEQUENCE [GENOMIC DNA]</scope>
    <source>
        <strain evidence="31">614</strain>
    </source>
</reference>
<reference evidence="30" key="13">
    <citation type="journal article" date="2010" name="J. Hosp. Infect.">
        <title>Epidemiology and clonality of multidrug-resistant Acinetobacter baumannii from a healthcare region in Hong Kong.</title>
        <authorList>
            <person name="Ho P.L."/>
            <person name="Ho A.Y."/>
            <person name="Chow K.H."/>
            <person name="Lai E.L."/>
            <person name="Ching P."/>
            <person name="Seto W.H."/>
        </authorList>
    </citation>
    <scope>NUCLEOTIDE SEQUENCE [GENOMIC DNA]</scope>
    <source>
        <strain evidence="32">HKU 1E6</strain>
        <strain evidence="30">HKU1</strain>
    </source>
</reference>
<reference evidence="28" key="14">
    <citation type="journal article" date="2010" name="Southeast Asian J. Trop. Med. Public Health">
        <title>High prevalence of bla(OXA)-23 in oligoclonal carbapenem-resistant Acinetobacter baumannii from Siriraj Hospital, Mahidol University, Bangkok, Thailand.</title>
        <authorList>
            <person name="Thapa B."/>
            <person name="Tribuddharat C."/>
            <person name="Srifuengfung S."/>
            <person name="Dhiraputra C."/>
        </authorList>
    </citation>
    <scope>NUCLEOTIDE SEQUENCE [GENOMIC DNA]</scope>
    <source>
        <strain evidence="28">Ab08-ColR</strain>
    </source>
</reference>
<reference evidence="26" key="15">
    <citation type="journal article" date="2011" name="Antimicrob. Agents Chemother.">
        <title>A novel insertion sequence, ISAba10, inserted into ISAba1 adjacent to the bla(OXA-23) gene and disrupting the outer membrane protein gene carO in Acinetobacter baumannii.</title>
        <authorList>
            <person name="Lee Y."/>
            <person name="Kim C.K."/>
            <person name="Lee H."/>
            <person name="Jeong S.H."/>
            <person name="Yong D."/>
            <person name="Lee K."/>
        </authorList>
    </citation>
    <scope>NUCLEOTIDE SEQUENCE [GENOMIC DNA]</scope>
    <scope>INDUCTION</scope>
    <source>
        <strain evidence="26">SC0701</strain>
    </source>
</reference>
<reference evidence="35" key="16">
    <citation type="journal article" date="2011" name="Antimicrob. Agents Chemother.">
        <title>Clinical Carbapenem-Resistant Acinetobacter baylyi Strain Coharboring blaSIM-1 and blaOXA-23 from China.</title>
        <authorList>
            <person name="Zhou Z."/>
            <person name="Du X."/>
            <person name="Wang L."/>
            <person name="Yang Q."/>
            <person name="Fu Y."/>
            <person name="Yu Y."/>
        </authorList>
    </citation>
    <scope>NUCLEOTIDE SEQUENCE [GENOMIC DNA]</scope>
    <source>
        <strain evidence="35">NB09A4</strain>
    </source>
</reference>
<reference evidence="33" key="17">
    <citation type="journal article" date="2011" name="J. Antimicrob. Chemother.">
        <title>Whole-genome comparison of two Acinetobacter baumannii isolates from a single patient, where resistance developed during tigecycline therapy.</title>
        <authorList>
            <person name="Hornsey M."/>
            <person name="Loman N."/>
            <person name="Wareham D.W."/>
            <person name="Ellington M.J."/>
            <person name="Pallen M.J."/>
            <person name="Turton J.F."/>
            <person name="Underwood A."/>
            <person name="Gaulton T."/>
            <person name="Thomas C.P."/>
            <person name="Doumith M."/>
            <person name="Livermore D.M."/>
            <person name="Woodford N."/>
        </authorList>
    </citation>
    <scope>NUCLEOTIDE SEQUENCE [LARGE SCALE GENOMIC DNA]</scope>
    <source>
        <strain evidence="33">OXA-23 clone 1</strain>
    </source>
</reference>
<reference evidence="34" key="18">
    <citation type="journal article" date="2011" name="J. Antimicrob. Chemother.">
        <title>AbaR4 replaces AbaR3 in a carbapenem-resistant Acinetobacter baumannii isolate belonging to global clone 1 from an Australian hospital.</title>
        <authorList>
            <person name="Hamidian M."/>
            <person name="Hall R.M."/>
        </authorList>
    </citation>
    <scope>NUCLEOTIDE SEQUENCE [GENOMIC DNA]</scope>
    <source>
        <strain evidence="34">D36</strain>
    </source>
</reference>
<reference evidence="33" key="19">
    <citation type="journal article" date="2011" name="J. Clin. Microbiol.">
        <title>Use of the accessory genome for characterization and typing of Acinetobacter baumannii.</title>
        <authorList>
            <person name="Turton J.F."/>
            <person name="Baddal B."/>
            <person name="Perry C."/>
        </authorList>
    </citation>
    <scope>NUCLEOTIDE SEQUENCE [GENOMIC DNA]</scope>
    <source>
        <strain evidence="33">OXA-23 clone 1</strain>
    </source>
</reference>
<reference evidence="38" key="20">
    <citation type="journal article" date="2015" name="Antimicrob. Agents Chemother.">
        <title>Dissemination of blaOXA-23 in Acinetobacter spp. in China: Main Roles of Conjugative Plasmid pAZJ221 and Transposon Tn2009.</title>
        <authorList>
            <person name="Liu L.L."/>
            <person name="Ji S.J."/>
            <person name="Ruan Z."/>
            <person name="Fu Y."/>
            <person name="Fu Y.Q."/>
            <person name="Wang Y.F."/>
            <person name="Yu Y.S."/>
        </authorList>
    </citation>
    <scope>NUCLEOTIDE SEQUENCE [GENOMIC DNA]</scope>
    <source>
        <strain evidence="38">A221</strain>
        <plasmid evidence="38">pAZJ221</plasmid>
    </source>
</reference>
<reference evidence="41" key="21">
    <citation type="journal article" date="2015" name="J. Antimicrob. Chemother.">
        <title>Distribution of the blaOXA-23-containing transposons Tn2006 and Tn2008 in Australian carbapenem-resistant Acinetobacter baumannii isolates.</title>
        <authorList>
            <person name="Nigro S."/>
            <person name="Hall R.M."/>
        </authorList>
    </citation>
    <scope>NUCLEOTIDE SEQUENCE [GENOMIC DNA]</scope>
    <source>
        <strain evidence="41">08325850</strain>
    </source>
</reference>
<reference evidence="39" key="22">
    <citation type="journal article" date="2015" name="J. Antimicrob. Chemother.">
        <title>Snapshot on carbapenemase-producing Pseudomonas aeruginosa and Acinetobacter baumannii in Bucharest hospitals reveals unusual clones and novel genetic surroundings for blaOXA-23.</title>
        <authorList>
            <person name="Gheorghe I."/>
            <person name="Novais A."/>
            <person name="Grosso F."/>
            <person name="Rodrigues C."/>
            <person name="Chifiriuc C."/>
            <person name="Lazar V."/>
            <person name="Peixe L."/>
        </authorList>
    </citation>
    <scope>NUCLEOTIDE SEQUENCE [GENOMIC DNA]</scope>
    <source>
        <strain evidence="39">ST765</strain>
        <plasmid evidence="39">pABKp1-like</plasmid>
    </source>
</reference>
<reference evidence="40 50" key="23">
    <citation type="journal article" date="2015" name="J. Bacteriol.">
        <title>Resources for Genetic and Genomic Analysis of Emerging Pathogen Acinetobacter baumannii.</title>
        <authorList>
            <person name="Gallagher L.A."/>
            <person name="Ramage E."/>
            <person name="Weiss E.J."/>
            <person name="Radey M."/>
            <person name="Hayden H.S."/>
            <person name="Held K.G."/>
            <person name="Huse H.K."/>
            <person name="Zurawski D.V."/>
            <person name="Brittnacher M.J."/>
            <person name="Manoil C."/>
        </authorList>
    </citation>
    <scope>NUCLEOTIDE SEQUENCE [LARGE SCALE GENOMIC DNA]</scope>
    <source>
        <strain evidence="40 50">AB5075-UW</strain>
    </source>
</reference>
<reference evidence="45 51" key="24">
    <citation type="submission" date="2018-12" db="EMBL/GenBank/DDBJ databases">
        <title>Draft Genome Sequences Human Pathogenic Acinetobacter baumannii Strains.</title>
        <authorList>
            <person name="Madhi M."/>
            <person name="Ronco T."/>
            <person name="Olsen R.H."/>
            <person name="Hassani A."/>
        </authorList>
    </citation>
    <scope>NUCLEOTIDE SEQUENCE [LARGE SCALE GENOMIC DNA]</scope>
    <source>
        <strain evidence="45 51">AB3</strain>
    </source>
</reference>
<reference evidence="55" key="25">
    <citation type="journal article" date="2013" name="Antimicrob. Agents Chemother.">
        <title>Structures of the class D Carbapenemases OXA-23 and OXA-146: mechanistic basis of activity against carbapenems, extended-spectrum cephalosporins, and aztreonam.</title>
        <authorList>
            <person name="Kaitany K.C."/>
            <person name="Klinger N.V."/>
            <person name="June C.M."/>
            <person name="Ramey M.E."/>
            <person name="Bonomo R.A."/>
            <person name="Powers R.A."/>
            <person name="Leonard D.A."/>
        </authorList>
    </citation>
    <scope>X-RAY CRYSTALLOGRAPHY (1.61 ANGSTROMS) OF 31-273 OF WILD TYPE AND MUTANT ALA-ALA-220 INS</scope>
    <scope>FUNCTION</scope>
    <scope>CATALYTIC ACTIVITY</scope>
    <scope>BIOPHYSICOCHEMICAL PROPERTIES</scope>
    <scope>MUTAGENESIS OF ALA-220</scope>
</reference>
<reference evidence="52 53" key="26">
    <citation type="journal article" date="2013" name="Chem. Biol.">
        <title>Structural basis for carbapenemase activity of the OXA-23 beta-lactamase from Acinetobacter baumannii.</title>
        <authorList>
            <person name="Smith C.A."/>
            <person name="Antunes N.T."/>
            <person name="Stewart N.K."/>
            <person name="Toth M."/>
            <person name="Kumarasiri M."/>
            <person name="Chang M."/>
            <person name="Mobashery S."/>
            <person name="Vakulenko S.B."/>
        </authorList>
    </citation>
    <scope>X-RAY CRYSTALLOGRAPHY (1.15 ANGSTROMS) OF 31-273 APO FORM AND IN COMPLEX WITH MEROPENEM SUBSTRATE</scope>
    <scope>FUNCTION</scope>
    <scope>CATALYTIC ACTIVITY</scope>
    <scope>BIOPHYSICOCHEMICAL PROPERTIES</scope>
    <scope>ACTIVE SITE</scope>
    <scope>CARBOXYLATION AT LYS-82</scope>
    <source>
        <strain evidence="13">ATCC 17978</strain>
    </source>
</reference>
<reference evidence="56 57 58 59" key="27">
    <citation type="journal article" date="2019" name="Antimicrob. Agents Chemother.">
        <title>Role of the Hydrophobic Bridge in the Carbapenemase Activity of Class D beta-Lactamases.</title>
        <authorList>
            <person name="Stewart N.K."/>
            <person name="Smith C.A."/>
            <person name="Antunes N.T."/>
            <person name="Toth M."/>
            <person name="Vakulenko S.B."/>
        </authorList>
    </citation>
    <scope>X-RAY CRYSTALLOGRAPHY (1.25 ANGSTROMS) OF 31-273 APO FORM OF MUTANT ALA-110/ALA-221 AND IN COMPLEX WITH CARBAPENEM SUBSTRATES</scope>
    <scope>FUNCTION</scope>
    <scope>CATALYTIC ACTIVITY</scope>
    <scope>BIOPHYSICOCHEMICAL PROPERTIES</scope>
    <scope>ACTIVE SITE</scope>
    <scope>CARBOXYLATION AT LYS-82</scope>
    <scope>MUTAGENESIS OF PHE-110 AND MET-221</scope>
    <source>
        <strain evidence="14">CIP 70.10</strain>
    </source>
</reference>
<reference evidence="60 61" key="28">
    <citation type="journal article" date="2022" name="MBio">
        <title>C6 Hydroxymethyl-Substituted Carbapenem MA-1-206 Inhibits the Major &lt;i&gt;Acinetobacter baumannii&lt;/i&gt; Carbapenemase OXA-23 by Impeding Deacylation.</title>
        <authorList>
            <person name="Stewart N.K."/>
            <person name="Toth M."/>
            <person name="Alqurafi M.A."/>
            <person name="Chai W."/>
            <person name="Nguyen T.Q."/>
            <person name="Quan P."/>
            <person name="Lee M."/>
            <person name="Buynak J.D."/>
            <person name="Smith C.A."/>
            <person name="Vakulenko S.B."/>
        </authorList>
    </citation>
    <scope>X-RAY CRYSTALLOGRAPHY (2.30 ANGSTROMS) OF 31-273 IN COMPLEXES WITH CARBAPENEM SUBSTRATE AND INHIBITOR</scope>
    <scope>FUNCTION</scope>
    <scope>ACTIVITY REGULATION</scope>
    <scope>CARBOXYLATION AT LYS-82</scope>
</reference>
<proteinExistence type="evidence at protein level"/>
<dbReference type="EC" id="3.5.2.6" evidence="8 9 10 11"/>
<dbReference type="EMBL" id="AY795964">
    <property type="protein sequence ID" value="AAV65289.1"/>
    <property type="molecule type" value="Genomic_DNA"/>
</dbReference>
<dbReference type="EMBL" id="EF016357">
    <property type="protein sequence ID" value="ABK34775.1"/>
    <property type="molecule type" value="Genomic_DNA"/>
</dbReference>
<dbReference type="EMBL" id="EF120622">
    <property type="protein sequence ID" value="ABL67479.1"/>
    <property type="molecule type" value="Genomic_DNA"/>
</dbReference>
<dbReference type="EMBL" id="EF127491">
    <property type="protein sequence ID" value="ABN41471.1"/>
    <property type="molecule type" value="Genomic_DNA"/>
</dbReference>
<dbReference type="EMBL" id="EF015500">
    <property type="protein sequence ID" value="ABO42039.1"/>
    <property type="molecule type" value="Genomic_DNA"/>
</dbReference>
<dbReference type="EMBL" id="EF534259">
    <property type="protein sequence ID" value="ABP87782.1"/>
    <property type="molecule type" value="Genomic_DNA"/>
</dbReference>
<dbReference type="EMBL" id="EU022368">
    <property type="protein sequence ID" value="ABU24822.1"/>
    <property type="molecule type" value="Genomic_DNA"/>
</dbReference>
<dbReference type="EMBL" id="EU594641">
    <property type="protein sequence ID" value="ACC97561.1"/>
    <property type="molecule type" value="Genomic_DNA"/>
</dbReference>
<dbReference type="EMBL" id="EU827526">
    <property type="protein sequence ID" value="ACF35045.1"/>
    <property type="molecule type" value="Genomic_DNA"/>
</dbReference>
<dbReference type="EMBL" id="EU977574">
    <property type="protein sequence ID" value="ACH73006.1"/>
    <property type="molecule type" value="Genomic_DNA"/>
</dbReference>
<dbReference type="EMBL" id="FJ998184">
    <property type="protein sequence ID" value="ACR84315.1"/>
    <property type="molecule type" value="Genomic_DNA"/>
</dbReference>
<dbReference type="EMBL" id="FJ975151">
    <property type="protein sequence ID" value="ACS14785.1"/>
    <property type="molecule type" value="Genomic_DNA"/>
</dbReference>
<dbReference type="EMBL" id="GQ268326">
    <property type="protein sequence ID" value="ACV74404.1"/>
    <property type="molecule type" value="Genomic_DNA"/>
</dbReference>
<dbReference type="EMBL" id="GQ849192">
    <property type="protein sequence ID" value="ACW65151.1"/>
    <property type="molecule type" value="Genomic_DNA"/>
</dbReference>
<dbReference type="EMBL" id="GU188041">
    <property type="protein sequence ID" value="ACZ71261.1"/>
    <property type="molecule type" value="Genomic_DNA"/>
</dbReference>
<dbReference type="EMBL" id="GQ861438">
    <property type="protein sequence ID" value="ADA70728.1"/>
    <property type="molecule type" value="Genomic_DNA"/>
</dbReference>
<dbReference type="EMBL" id="HM053480">
    <property type="protein sequence ID" value="ADI24453.1"/>
    <property type="molecule type" value="Genomic_DNA"/>
</dbReference>
<dbReference type="EMBL" id="HQ700358">
    <property type="protein sequence ID" value="ADT82731.1"/>
    <property type="molecule type" value="Genomic_DNA"/>
</dbReference>
<dbReference type="EMBL" id="JN107991">
    <property type="protein sequence ID" value="AEO37447.1"/>
    <property type="molecule type" value="Genomic_DNA"/>
</dbReference>
<dbReference type="EMBL" id="JF731028">
    <property type="protein sequence ID" value="AER61540.1"/>
    <property type="molecule type" value="Genomic_DNA"/>
</dbReference>
<dbReference type="EMBL" id="JX481979">
    <property type="protein sequence ID" value="AFV47996.1"/>
    <property type="molecule type" value="Genomic_DNA"/>
</dbReference>
<dbReference type="EMBL" id="KJ493819">
    <property type="protein sequence ID" value="AHM95286.1"/>
    <property type="molecule type" value="Genomic_DNA"/>
</dbReference>
<dbReference type="EMBL" id="KM977710">
    <property type="protein sequence ID" value="AIZ49290.1"/>
    <property type="molecule type" value="Genomic_DNA"/>
</dbReference>
<dbReference type="EMBL" id="KM922672">
    <property type="protein sequence ID" value="AJF79934.1"/>
    <property type="molecule type" value="Genomic_DNA"/>
</dbReference>
<dbReference type="EMBL" id="KP074966">
    <property type="protein sequence ID" value="AJG42107.1"/>
    <property type="molecule type" value="Genomic_DNA"/>
</dbReference>
<dbReference type="EMBL" id="CP008706">
    <property type="protein sequence ID" value="AKA30333.1"/>
    <property type="molecule type" value="Genomic_DNA"/>
</dbReference>
<dbReference type="EMBL" id="KP780408">
    <property type="protein sequence ID" value="AKH45594.1"/>
    <property type="molecule type" value="Genomic_DNA"/>
</dbReference>
<dbReference type="EMBL" id="MF594764">
    <property type="protein sequence ID" value="AWK92615.2"/>
    <property type="molecule type" value="Genomic_DNA"/>
</dbReference>
<dbReference type="EMBL" id="MF594777">
    <property type="protein sequence ID" value="AWK92628.2"/>
    <property type="molecule type" value="Genomic_DNA"/>
</dbReference>
<dbReference type="EMBL" id="AJ132105">
    <property type="protein sequence ID" value="CAB69042.1"/>
    <property type="molecule type" value="Genomic_DNA"/>
</dbReference>
<dbReference type="EMBL" id="HG797027">
    <property type="protein sequence ID" value="CDL67228.1"/>
    <property type="molecule type" value="Genomic_DNA"/>
</dbReference>
<dbReference type="EMBL" id="AAYLMQ010000093">
    <property type="protein sequence ID" value="EGY2379345.1"/>
    <property type="molecule type" value="Genomic_DNA"/>
</dbReference>
<dbReference type="EMBL" id="AAYLMQ010000107">
    <property type="protein sequence ID" value="EGY2379426.1"/>
    <property type="molecule type" value="Genomic_DNA"/>
</dbReference>
<dbReference type="EMBL" id="VYVC01000050">
    <property type="protein sequence ID" value="KAA9216646.1"/>
    <property type="molecule type" value="Genomic_DNA"/>
</dbReference>
<dbReference type="EMBL" id="LRDT01000030">
    <property type="protein sequence ID" value="KZA16122.1"/>
    <property type="molecule type" value="Genomic_DNA"/>
</dbReference>
<dbReference type="EMBL" id="JACSVK010000114">
    <property type="protein sequence ID" value="MBD0221924.1"/>
    <property type="molecule type" value="Genomic_DNA"/>
</dbReference>
<dbReference type="EMBL" id="WIOC01000073">
    <property type="protein sequence ID" value="MQR51776.1"/>
    <property type="molecule type" value="Genomic_DNA"/>
</dbReference>
<dbReference type="EMBL" id="WPIP01000372">
    <property type="protein sequence ID" value="MVM93964.1"/>
    <property type="molecule type" value="Genomic_DNA"/>
</dbReference>
<dbReference type="EMBL" id="JAAGTY010000054">
    <property type="protein sequence ID" value="NDW43288.1"/>
    <property type="molecule type" value="Genomic_DNA"/>
</dbReference>
<dbReference type="EMBL" id="LYKI01000030">
    <property type="protein sequence ID" value="OIG71373.1"/>
    <property type="molecule type" value="Genomic_DNA"/>
</dbReference>
<dbReference type="EMBL" id="NGKM01000046">
    <property type="protein sequence ID" value="OWK64749.1"/>
    <property type="molecule type" value="Genomic_DNA"/>
</dbReference>
<dbReference type="EMBL" id="PHJT03000072">
    <property type="protein sequence ID" value="PQL85941.1"/>
    <property type="molecule type" value="Genomic_DNA"/>
</dbReference>
<dbReference type="EMBL" id="NEPB01000091">
    <property type="protein sequence ID" value="PRN27734.1"/>
    <property type="molecule type" value="Genomic_DNA"/>
</dbReference>
<dbReference type="EMBL" id="CP072270">
    <property type="protein sequence ID" value="QTK43295.1"/>
    <property type="molecule type" value="Genomic_DNA"/>
</dbReference>
<dbReference type="EMBL" id="RFDI01000270">
    <property type="protein sequence ID" value="RSR60918.1"/>
    <property type="molecule type" value="Genomic_DNA"/>
</dbReference>
<dbReference type="EMBL" id="UFDJ01000044">
    <property type="protein sequence ID" value="SSI73996.1"/>
    <property type="molecule type" value="Genomic_DNA"/>
</dbReference>
<dbReference type="EMBL" id="UFMQ01000065">
    <property type="protein sequence ID" value="SST34561.1"/>
    <property type="molecule type" value="Genomic_DNA"/>
</dbReference>
<dbReference type="EMBL" id="VHGX01000090">
    <property type="protein sequence ID" value="TPU72411.1"/>
    <property type="molecule type" value="Genomic_DNA"/>
</dbReference>
<dbReference type="EMBL" id="CP110462">
    <property type="protein sequence ID" value="UZG61382.1"/>
    <property type="molecule type" value="Genomic_DNA"/>
</dbReference>
<dbReference type="EMBL" id="CP110462">
    <property type="protein sequence ID" value="UZG62174.1"/>
    <property type="molecule type" value="Genomic_DNA"/>
</dbReference>
<dbReference type="EMBL" id="CP110467">
    <property type="protein sequence ID" value="UZG64349.1"/>
    <property type="molecule type" value="Genomic_DNA"/>
</dbReference>
<dbReference type="EMBL" id="CP110468">
    <property type="protein sequence ID" value="UZG64571.1"/>
    <property type="molecule type" value="Genomic_DNA"/>
</dbReference>
<dbReference type="EMBL" id="RXLU01000150">
    <property type="protein sequence ID" value="RTQ67601.1"/>
    <property type="molecule type" value="Genomic_DNA"/>
</dbReference>
<dbReference type="RefSeq" id="WP_001046004.1">
    <property type="nucleotide sequence ID" value="NZ_WYAO01000025.1"/>
</dbReference>
<dbReference type="RefSeq" id="YP_009066594.1">
    <property type="nucleotide sequence ID" value="NC_025109.1"/>
</dbReference>
<dbReference type="PDB" id="4JF4">
    <property type="method" value="X-ray"/>
    <property type="resolution" value="2.14 A"/>
    <property type="chains" value="A/B=31-273"/>
</dbReference>
<dbReference type="PDB" id="4JF5">
    <property type="method" value="X-ray"/>
    <property type="resolution" value="1.15 A"/>
    <property type="chains" value="A=31-273"/>
</dbReference>
<dbReference type="PDB" id="4JF6">
    <property type="method" value="X-ray"/>
    <property type="resolution" value="2.50 A"/>
    <property type="chains" value="A=31-273"/>
</dbReference>
<dbReference type="PDB" id="4K0X">
    <property type="method" value="X-ray"/>
    <property type="resolution" value="1.61 A"/>
    <property type="chains" value="A=31-273"/>
</dbReference>
<dbReference type="PDB" id="6N6T">
    <property type="method" value="X-ray"/>
    <property type="resolution" value="1.25 A"/>
    <property type="chains" value="A=31-273"/>
</dbReference>
<dbReference type="PDB" id="6N6U">
    <property type="method" value="X-ray"/>
    <property type="resolution" value="1.55 A"/>
    <property type="chains" value="A=32-273"/>
</dbReference>
<dbReference type="PDB" id="6N6V">
    <property type="method" value="X-ray"/>
    <property type="resolution" value="1.55 A"/>
    <property type="chains" value="A=32-273"/>
</dbReference>
<dbReference type="PDB" id="6N6W">
    <property type="method" value="X-ray"/>
    <property type="resolution" value="3.25 A"/>
    <property type="chains" value="A=36-273"/>
</dbReference>
<dbReference type="PDB" id="6N6X">
    <property type="method" value="X-ray"/>
    <property type="resolution" value="3.10 A"/>
    <property type="chains" value="A=35-273"/>
</dbReference>
<dbReference type="PDB" id="6N6Y">
    <property type="method" value="X-ray"/>
    <property type="resolution" value="3.50 A"/>
    <property type="chains" value="A=35-273"/>
</dbReference>
<dbReference type="PDB" id="7T7D">
    <property type="method" value="X-ray"/>
    <property type="resolution" value="2.65 A"/>
    <property type="chains" value="A=31-273"/>
</dbReference>
<dbReference type="PDB" id="7T7E">
    <property type="method" value="X-ray"/>
    <property type="resolution" value="2.40 A"/>
    <property type="chains" value="A=31-273"/>
</dbReference>
<dbReference type="PDB" id="7T7F">
    <property type="method" value="X-ray"/>
    <property type="resolution" value="2.30 A"/>
    <property type="chains" value="A=31-273"/>
</dbReference>
<dbReference type="PDB" id="7T7G">
    <property type="method" value="X-ray"/>
    <property type="resolution" value="2.50 A"/>
    <property type="chains" value="A=31-273"/>
</dbReference>
<dbReference type="PDBsum" id="4JF4"/>
<dbReference type="PDBsum" id="4JF5"/>
<dbReference type="PDBsum" id="4JF6"/>
<dbReference type="PDBsum" id="4K0X"/>
<dbReference type="PDBsum" id="6N6T"/>
<dbReference type="PDBsum" id="6N6U"/>
<dbReference type="PDBsum" id="6N6V"/>
<dbReference type="PDBsum" id="6N6W"/>
<dbReference type="PDBsum" id="6N6X"/>
<dbReference type="PDBsum" id="6N6Y"/>
<dbReference type="PDBsum" id="7T7D"/>
<dbReference type="PDBsum" id="7T7E"/>
<dbReference type="PDBsum" id="7T7F"/>
<dbReference type="PDBsum" id="7T7G"/>
<dbReference type="SMR" id="Q9L4P2"/>
<dbReference type="BindingDB" id="Q9L4P2"/>
<dbReference type="ChEMBL" id="CHEMBL3885669"/>
<dbReference type="CARD" id="ARO:3001418">
    <property type="molecule name" value="OXA-23"/>
    <property type="mechanism identifier" value="ARO:0001004"/>
    <property type="mechanism name" value="antibiotic inactivation"/>
</dbReference>
<dbReference type="KEGG" id="ag:CAB69042"/>
<dbReference type="PATRIC" id="fig|470.1292.peg.3438"/>
<dbReference type="OMA" id="WNRDHTL"/>
<dbReference type="Proteomes" id="UP000032746">
    <property type="component" value="Chromosome"/>
</dbReference>
<dbReference type="Proteomes" id="UP000076296">
    <property type="component" value="Unassembled WGS sequence"/>
</dbReference>
<dbReference type="Proteomes" id="UP000179937">
    <property type="component" value="Unassembled WGS sequence"/>
</dbReference>
<dbReference type="Proteomes" id="UP000197394">
    <property type="component" value="Unassembled WGS sequence"/>
</dbReference>
<dbReference type="Proteomes" id="UP000237823">
    <property type="component" value="Unassembled WGS sequence"/>
</dbReference>
<dbReference type="Proteomes" id="UP000252694">
    <property type="component" value="Unassembled WGS sequence"/>
</dbReference>
<dbReference type="Proteomes" id="UP000268239">
    <property type="component" value="Unassembled WGS sequence"/>
</dbReference>
<dbReference type="Proteomes" id="UP000280073">
    <property type="component" value="Unassembled WGS sequence"/>
</dbReference>
<dbReference type="Proteomes" id="UP000439424">
    <property type="component" value="Unassembled WGS sequence"/>
</dbReference>
<dbReference type="Proteomes" id="UP000461234">
    <property type="component" value="Unassembled WGS sequence"/>
</dbReference>
<dbReference type="Proteomes" id="UP000470018">
    <property type="component" value="Unassembled WGS sequence"/>
</dbReference>
<dbReference type="Proteomes" id="UP000634608">
    <property type="component" value="Unassembled WGS sequence"/>
</dbReference>
<dbReference type="Proteomes" id="UP000664966">
    <property type="component" value="Chromosome"/>
</dbReference>
<dbReference type="GO" id="GO:0042597">
    <property type="term" value="C:periplasmic space"/>
    <property type="evidence" value="ECO:0007669"/>
    <property type="project" value="UniProtKB-SubCell"/>
</dbReference>
<dbReference type="GO" id="GO:0005886">
    <property type="term" value="C:plasma membrane"/>
    <property type="evidence" value="ECO:0007669"/>
    <property type="project" value="TreeGrafter"/>
</dbReference>
<dbReference type="GO" id="GO:0016787">
    <property type="term" value="F:hydrolase activity"/>
    <property type="evidence" value="ECO:0007669"/>
    <property type="project" value="UniProtKB-KW"/>
</dbReference>
<dbReference type="GO" id="GO:0008658">
    <property type="term" value="F:penicillin binding"/>
    <property type="evidence" value="ECO:0007669"/>
    <property type="project" value="InterPro"/>
</dbReference>
<dbReference type="GO" id="GO:0071555">
    <property type="term" value="P:cell wall organization"/>
    <property type="evidence" value="ECO:0007669"/>
    <property type="project" value="TreeGrafter"/>
</dbReference>
<dbReference type="GO" id="GO:0046677">
    <property type="term" value="P:response to antibiotic"/>
    <property type="evidence" value="ECO:0007669"/>
    <property type="project" value="UniProtKB-KW"/>
</dbReference>
<dbReference type="Gene3D" id="3.40.710.10">
    <property type="entry name" value="DD-peptidase/beta-lactamase superfamily"/>
    <property type="match status" value="1"/>
</dbReference>
<dbReference type="InterPro" id="IPR050515">
    <property type="entry name" value="Bact_Transpept/Beta-Lactamase"/>
</dbReference>
<dbReference type="InterPro" id="IPR012338">
    <property type="entry name" value="Beta-lactam/transpept-like"/>
</dbReference>
<dbReference type="InterPro" id="IPR001460">
    <property type="entry name" value="PCN-bd_Tpept"/>
</dbReference>
<dbReference type="NCBIfam" id="NF012161">
    <property type="entry name" value="bla_class_D_main"/>
    <property type="match status" value="1"/>
</dbReference>
<dbReference type="NCBIfam" id="NF000266">
    <property type="entry name" value="blaOXA-23_like"/>
    <property type="match status" value="1"/>
</dbReference>
<dbReference type="PANTHER" id="PTHR30627:SF6">
    <property type="entry name" value="BETA-LACTAMASE YBXI-RELATED"/>
    <property type="match status" value="1"/>
</dbReference>
<dbReference type="PANTHER" id="PTHR30627">
    <property type="entry name" value="PEPTIDOGLYCAN D,D-TRANSPEPTIDASE"/>
    <property type="match status" value="1"/>
</dbReference>
<dbReference type="Pfam" id="PF00905">
    <property type="entry name" value="Transpeptidase"/>
    <property type="match status" value="1"/>
</dbReference>
<dbReference type="SUPFAM" id="SSF56601">
    <property type="entry name" value="beta-lactamase/transpeptidase-like"/>
    <property type="match status" value="1"/>
</dbReference>
<dbReference type="PROSITE" id="PS51257">
    <property type="entry name" value="PROKAR_LIPOPROTEIN"/>
    <property type="match status" value="1"/>
</dbReference>
<accession>Q9L4P2</accession>
<accession>A0A2U8KKH1</accession>
<accession>A0A2U8KKN2</accession>
<gene>
    <name evidence="12" type="primary">OXA-23</name>
    <name evidence="12 43" type="synonym">ari-1</name>
    <name evidence="27" type="synonym">bla-OXA-23</name>
    <name evidence="44" type="synonym">bla_2</name>
    <name evidence="46" type="synonym">bla_3</name>
    <name evidence="42" type="synonym">blaOXA</name>
    <name evidence="16" type="synonym">blaOXA-23</name>
    <name evidence="40" type="ORF">ABUW_0563</name>
</gene>
<organism evidence="43">
    <name type="scientific">Acinetobacter baumannii</name>
    <dbReference type="NCBI Taxonomy" id="470"/>
    <lineage>
        <taxon>Bacteria</taxon>
        <taxon>Pseudomonadati</taxon>
        <taxon>Pseudomonadota</taxon>
        <taxon>Gammaproteobacteria</taxon>
        <taxon>Moraxellales</taxon>
        <taxon>Moraxellaceae</taxon>
        <taxon>Acinetobacter</taxon>
        <taxon>Acinetobacter calcoaceticus/baumannii complex</taxon>
    </lineage>
</organism>